<feature type="chain" id="PRO_0000100740" description="POU domain, class 4, transcription factor 2">
    <location>
        <begin position="1"/>
        <end position="409"/>
    </location>
</feature>
<feature type="domain" description="POU-specific" evidence="3">
    <location>
        <begin position="250"/>
        <end position="327"/>
    </location>
</feature>
<feature type="DNA-binding region" description="Homeobox" evidence="2">
    <location>
        <begin position="345"/>
        <end position="404"/>
    </location>
</feature>
<feature type="region of interest" description="Disordered" evidence="4">
    <location>
        <begin position="26"/>
        <end position="93"/>
    </location>
</feature>
<feature type="region of interest" description="Required for transcriptional activation" evidence="1">
    <location>
        <begin position="91"/>
        <end position="237"/>
    </location>
</feature>
<feature type="region of interest" description="Disordered" evidence="4">
    <location>
        <begin position="153"/>
        <end position="188"/>
    </location>
</feature>
<feature type="region of interest" description="Required for DNA-binding and transcriptional repression" evidence="1">
    <location>
        <begin position="238"/>
        <end position="409"/>
    </location>
</feature>
<feature type="short sequence motif" description="POU-IV box">
    <location>
        <begin position="110"/>
        <end position="119"/>
    </location>
</feature>
<feature type="short sequence motif" description="Nuclear speckle targeting signal" evidence="5">
    <location>
        <begin position="171"/>
        <end position="185"/>
    </location>
</feature>
<feature type="compositionally biased region" description="Low complexity" evidence="4">
    <location>
        <begin position="31"/>
        <end position="52"/>
    </location>
</feature>
<feature type="compositionally biased region" description="Gly residues" evidence="4">
    <location>
        <begin position="53"/>
        <end position="69"/>
    </location>
</feature>
<feature type="compositionally biased region" description="Low complexity" evidence="4">
    <location>
        <begin position="153"/>
        <end position="166"/>
    </location>
</feature>
<feature type="compositionally biased region" description="Basic residues" evidence="4">
    <location>
        <begin position="170"/>
        <end position="184"/>
    </location>
</feature>
<feature type="splice variant" id="VSP_058837" description="In isoform 2.">
    <location>
        <begin position="1"/>
        <end position="144"/>
    </location>
</feature>
<feature type="sequence variant" id="VAR_059321" description="In dbSNP:rs13152799.">
    <original>I</original>
    <variation>T</variation>
    <location>
        <position position="40"/>
    </location>
</feature>
<feature type="mutagenesis site" description="Absent from nuclear speckle; no change in transcriptional activity." evidence="5">
    <location>
        <begin position="171"/>
        <end position="185"/>
    </location>
</feature>
<feature type="sequence conflict" description="In Ref. 1; AAA16509 and 3; BAG37481/AAI36345/AAI36346." evidence="9" ref="1 3">
    <original>G</original>
    <variation>GG</variation>
    <location>
        <position position="54"/>
    </location>
</feature>
<feature type="sequence conflict" description="In Ref. 1; AAA16509." evidence="9" ref="1">
    <original>S</original>
    <variation>C</variation>
    <location>
        <position position="165"/>
    </location>
</feature>
<feature type="sequence conflict" description="In Ref. 2; CAA50589." evidence="9" ref="2">
    <location>
        <position position="182"/>
    </location>
</feature>
<protein>
    <recommendedName>
        <fullName evidence="9">POU domain, class 4, transcription factor 2</fullName>
    </recommendedName>
    <alternativeName>
        <fullName>Brain-specific homeobox/POU domain protein 3B</fullName>
        <shortName>Brain-3B</shortName>
        <shortName>Brn-3B</shortName>
    </alternativeName>
</protein>
<sequence length="409" mass="43087">MMMMSLNSKQAFSMPHGGSLHVEPKYSALHSTSPGSSAPIAPSASSPSSSSNAGGGGGGGGGGGGGGGRSSSSSSSGSSGGGGSEAMRRACLPTPPSNIFGGLDESLLARAEALAAVDIVSQSKSHHHHPPHHSPFKPDATYHTMNTIPCTSAASSSSVPISHPSALAGTHHHHHHHHHHHHQPHQALEGELLEHLSPGLALGAMAGPDGAVVSTPAHAPHMATMNPMHQAALSMAHAHGLPSHMGCMSDVDADPRDLEAFAERFKQRRIKLGVTQADVGSALANLKIPGVGSLSQSTICRFESLTLSHNNMIALKPILQAWLEEAEKSHREKLTKPELFNGAEKKRKRTSIAAPEKRSLEAYFAIQPRPSSEKIAAIAEKLDLKKNVVRVWFCNQRQKQKRMKYSAGI</sequence>
<comment type="function">
    <text evidence="1 5 6">Tissue-specific DNA-binding transcription factor involved in the development and differentiation of target cells (PubMed:19266028, PubMed:23805044). Functions either as activator or repressor modulating the rate of target gene transcription through RNA polymerase II enzyme in a promoter-dependent manner (PubMed:19266028, PubMed:23805044). Binds to the consensus octamer motif 5'-AT[A/T]A[T/A]T[A/T]A-3' of promoter of target genes. Plays a fundamental role in the gene regulatory network essential for retinal ganglion cell (RGC) differentiation. Binds to an octamer site to form a ternary complex with ISL1; cooperates positively with ISL1 and ISL2 to potentiate transcriptional activation of RGC target genes being involved in RGC fate commitment in the developing retina and RGC axon formation and pathfinding. Inhibits DLX1 and DLX2 transcriptional activities preventing DLX1- and DLX2-mediated ability to promote amacrine cell fate specification. In cooperation with TP53 potentiates transcriptional activation of BAX promoter activity increasing neuronal cell apoptosis. Negatively regulates BAX promoter activity in the absence of TP53. Acts as a transcriptional coactivator via its interaction with the transcription factor ESR1 by enhancing its effect on estrogen response element (ERE)-containing promoter. Antagonizes the transcriptional stimulatory activity of POU4F1 by preventing its binding to an octamer motif. Involved in TNFSF11-mediated terminal osteoclast differentiation (By similarity).</text>
</comment>
<comment type="subunit">
    <text evidence="1">Interacts with POU4F1; this interaction inhibits both POU4F1 DNA-binding and transcriptional activities. Interacts (C-terminus) with ESR1 (via DNA-binding domain); this interaction increases the estrogen receptor ESR1 transcriptional activity in a DNA- and ligand 17-beta-estradiol-independent manner. Interacts (via C-terminus) with TP53 (via N-terminus). Interacts with DLX1 (via homeobox DNA-binding domain); this interaction suppresses DLX1-mediated transcriptional activity in postnatal retina enhancing retinal ganglion cell (RGC) differentiation. Interacts with DLX2 (via homeobox DNA-binding domain); this interaction enhances RGC differentiation. Interacts (via C-terminus) with ISL1 (via C-terminus). Interacts with ISL2. Interacts with LHX2.</text>
</comment>
<comment type="interaction">
    <interactant intactId="EBI-17236143">
        <id>Q12837</id>
    </interactant>
    <interactant intactId="EBI-10173507">
        <id>Q6UY14-3</id>
        <label>ADAMTSL4</label>
    </interactant>
    <organismsDiffer>false</organismsDiffer>
    <experiments>3</experiments>
</comment>
<comment type="interaction">
    <interactant intactId="EBI-17236143">
        <id>Q12837</id>
    </interactant>
    <interactant intactId="EBI-1211484">
        <id>P05187</id>
        <label>ALPP</label>
    </interactant>
    <organismsDiffer>false</organismsDiffer>
    <experiments>3</experiments>
</comment>
<comment type="interaction">
    <interactant intactId="EBI-17236143">
        <id>Q12837</id>
    </interactant>
    <interactant intactId="EBI-3904822">
        <id>P48745</id>
        <label>CCN3</label>
    </interactant>
    <organismsDiffer>false</organismsDiffer>
    <experiments>3</experiments>
</comment>
<comment type="interaction">
    <interactant intactId="EBI-17236143">
        <id>Q12837</id>
    </interactant>
    <interactant intactId="EBI-13046140">
        <id>P15529-3</id>
        <label>CD46</label>
    </interactant>
    <organismsDiffer>false</organismsDiffer>
    <experiments>3</experiments>
</comment>
<comment type="interaction">
    <interactant intactId="EBI-17236143">
        <id>Q12837</id>
    </interactant>
    <interactant intactId="EBI-12261896">
        <id>Q5T4B2</id>
        <label>CERCAM</label>
    </interactant>
    <organismsDiffer>false</organismsDiffer>
    <experiments>3</experiments>
</comment>
<comment type="interaction">
    <interactant intactId="EBI-17236143">
        <id>Q12837</id>
    </interactant>
    <interactant intactId="EBI-741528">
        <id>Q9UKJ5</id>
        <label>CHIC2</label>
    </interactant>
    <organismsDiffer>false</organismsDiffer>
    <experiments>3</experiments>
</comment>
<comment type="interaction">
    <interactant intactId="EBI-17236143">
        <id>Q12837</id>
    </interactant>
    <interactant intactId="EBI-947551">
        <id>Q9H2X0</id>
        <label>CHRD</label>
    </interactant>
    <organismsDiffer>false</organismsDiffer>
    <experiments>3</experiments>
</comment>
<comment type="interaction">
    <interactant intactId="EBI-17236143">
        <id>Q12837</id>
    </interactant>
    <interactant intactId="EBI-12593838">
        <id>Q6WN34-2</id>
        <label>CHRDL2</label>
    </interactant>
    <organismsDiffer>false</organismsDiffer>
    <experiments>3</experiments>
</comment>
<comment type="interaction">
    <interactant intactId="EBI-17236143">
        <id>Q12837</id>
    </interactant>
    <interactant intactId="EBI-747133">
        <id>P27658</id>
        <label>COL8A1</label>
    </interactant>
    <organismsDiffer>false</organismsDiffer>
    <experiments>5</experiments>
</comment>
<comment type="interaction">
    <interactant intactId="EBI-17236143">
        <id>Q12837</id>
    </interactant>
    <interactant intactId="EBI-14156412">
        <id>Q08AG9</id>
        <label>CYP21A2</label>
    </interactant>
    <organismsDiffer>false</organismsDiffer>
    <experiments>3</experiments>
</comment>
<comment type="interaction">
    <interactant intactId="EBI-17236143">
        <id>Q12837</id>
    </interactant>
    <interactant intactId="EBI-3867333">
        <id>A8MQ03</id>
        <label>CYSRT1</label>
    </interactant>
    <organismsDiffer>false</organismsDiffer>
    <experiments>3</experiments>
</comment>
<comment type="interaction">
    <interactant intactId="EBI-17236143">
        <id>Q12837</id>
    </interactant>
    <interactant intactId="EBI-3908248">
        <id>O60479</id>
        <label>DLX3</label>
    </interactant>
    <organismsDiffer>false</organismsDiffer>
    <experiments>3</experiments>
</comment>
<comment type="interaction">
    <interactant intactId="EBI-17236143">
        <id>Q12837</id>
    </interactant>
    <interactant intactId="EBI-12845222">
        <id>Q9NVL1-2</id>
        <label>FAM86C1P</label>
    </interactant>
    <organismsDiffer>false</organismsDiffer>
    <experiments>5</experiments>
</comment>
<comment type="interaction">
    <interactant intactId="EBI-17236143">
        <id>Q12837</id>
    </interactant>
    <interactant intactId="EBI-747754">
        <id>P28799</id>
        <label>GRN</label>
    </interactant>
    <organismsDiffer>false</organismsDiffer>
    <experiments>6</experiments>
</comment>
<comment type="interaction">
    <interactant intactId="EBI-17236143">
        <id>Q12837</id>
    </interactant>
    <interactant intactId="EBI-745201">
        <id>Q9BSH5</id>
        <label>HDHD3</label>
    </interactant>
    <organismsDiffer>false</organismsDiffer>
    <experiments>3</experiments>
</comment>
<comment type="interaction">
    <interactant intactId="EBI-17236143">
        <id>Q12837</id>
    </interactant>
    <interactant intactId="EBI-12881610">
        <id>Q4VC39</id>
        <label>HIGD2B</label>
    </interactant>
    <organismsDiffer>false</organismsDiffer>
    <experiments>3</experiments>
</comment>
<comment type="interaction">
    <interactant intactId="EBI-17236143">
        <id>Q12837</id>
    </interactant>
    <interactant intactId="EBI-947015">
        <id>P24592</id>
        <label>IGFBP6</label>
    </interactant>
    <organismsDiffer>false</organismsDiffer>
    <experiments>3</experiments>
</comment>
<comment type="interaction">
    <interactant intactId="EBI-17236143">
        <id>Q12837</id>
    </interactant>
    <interactant intactId="EBI-3870426">
        <id>Q6UW32</id>
        <label>IGFL1</label>
    </interactant>
    <organismsDiffer>false</organismsDiffer>
    <experiments>3</experiments>
</comment>
<comment type="interaction">
    <interactant intactId="EBI-17236143">
        <id>Q12837</id>
    </interactant>
    <interactant intactId="EBI-6509505">
        <id>Q0VD86</id>
        <label>INCA1</label>
    </interactant>
    <organismsDiffer>false</organismsDiffer>
    <experiments>3</experiments>
</comment>
<comment type="interaction">
    <interactant intactId="EBI-17236143">
        <id>Q12837</id>
    </interactant>
    <interactant intactId="EBI-10981970">
        <id>Q5T749</id>
        <label>KPRP</label>
    </interactant>
    <organismsDiffer>false</organismsDiffer>
    <experiments>5</experiments>
</comment>
<comment type="interaction">
    <interactant intactId="EBI-17236143">
        <id>Q12837</id>
    </interactant>
    <interactant intactId="EBI-948001">
        <id>Q15323</id>
        <label>KRT31</label>
    </interactant>
    <organismsDiffer>false</organismsDiffer>
    <experiments>3</experiments>
</comment>
<comment type="interaction">
    <interactant intactId="EBI-17236143">
        <id>Q12837</id>
    </interactant>
    <interactant intactId="EBI-1058674">
        <id>Q92764</id>
        <label>KRT35</label>
    </interactant>
    <organismsDiffer>false</organismsDiffer>
    <experiments>3</experiments>
</comment>
<comment type="interaction">
    <interactant intactId="EBI-17236143">
        <id>Q12837</id>
    </interactant>
    <interactant intactId="EBI-1047263">
        <id>O76015</id>
        <label>KRT38</label>
    </interactant>
    <organismsDiffer>false</organismsDiffer>
    <experiments>3</experiments>
</comment>
<comment type="interaction">
    <interactant intactId="EBI-17236143">
        <id>Q12837</id>
    </interactant>
    <interactant intactId="EBI-10221390">
        <id>P78385</id>
        <label>KRT83</label>
    </interactant>
    <organismsDiffer>false</organismsDiffer>
    <experiments>3</experiments>
</comment>
<comment type="interaction">
    <interactant intactId="EBI-17236143">
        <id>Q12837</id>
    </interactant>
    <interactant intactId="EBI-10217483">
        <id>P60412</id>
        <label>KRTAP10-11</label>
    </interactant>
    <organismsDiffer>false</organismsDiffer>
    <experiments>3</experiments>
</comment>
<comment type="interaction">
    <interactant intactId="EBI-17236143">
        <id>Q12837</id>
    </interactant>
    <interactant intactId="EBI-10172150">
        <id>P60370</id>
        <label>KRTAP10-5</label>
    </interactant>
    <organismsDiffer>false</organismsDiffer>
    <experiments>3</experiments>
</comment>
<comment type="interaction">
    <interactant intactId="EBI-17236143">
        <id>Q12837</id>
    </interactant>
    <interactant intactId="EBI-10171774">
        <id>P60410</id>
        <label>KRTAP10-8</label>
    </interactant>
    <organismsDiffer>false</organismsDiffer>
    <experiments>3</experiments>
</comment>
<comment type="interaction">
    <interactant intactId="EBI-17236143">
        <id>Q12837</id>
    </interactant>
    <interactant intactId="EBI-10172052">
        <id>P60411</id>
        <label>KRTAP10-9</label>
    </interactant>
    <organismsDiffer>false</organismsDiffer>
    <experiments>6</experiments>
</comment>
<comment type="interaction">
    <interactant intactId="EBI-17236143">
        <id>Q12837</id>
    </interactant>
    <interactant intactId="EBI-10210845">
        <id>P59990</id>
        <label>KRTAP12-1</label>
    </interactant>
    <organismsDiffer>false</organismsDiffer>
    <experiments>3</experiments>
</comment>
<comment type="interaction">
    <interactant intactId="EBI-17236143">
        <id>Q12837</id>
    </interactant>
    <interactant intactId="EBI-10176379">
        <id>P59991</id>
        <label>KRTAP12-2</label>
    </interactant>
    <organismsDiffer>false</organismsDiffer>
    <experiments>3</experiments>
</comment>
<comment type="interaction">
    <interactant intactId="EBI-17236143">
        <id>Q12837</id>
    </interactant>
    <interactant intactId="EBI-11953334">
        <id>P60328</id>
        <label>KRTAP12-3</label>
    </interactant>
    <organismsDiffer>false</organismsDiffer>
    <experiments>3</experiments>
</comment>
<comment type="interaction">
    <interactant intactId="EBI-17236143">
        <id>Q12837</id>
    </interactant>
    <interactant intactId="EBI-10176396">
        <id>P60329</id>
        <label>KRTAP12-4</label>
    </interactant>
    <organismsDiffer>false</organismsDiffer>
    <experiments>3</experiments>
</comment>
<comment type="interaction">
    <interactant intactId="EBI-17236143">
        <id>Q12837</id>
    </interactant>
    <interactant intactId="EBI-10241252">
        <id>Q3SY46</id>
        <label>KRTAP13-3</label>
    </interactant>
    <organismsDiffer>false</organismsDiffer>
    <experiments>3</experiments>
</comment>
<comment type="interaction">
    <interactant intactId="EBI-17236143">
        <id>Q12837</id>
    </interactant>
    <interactant intactId="EBI-12196745">
        <id>Q3LHN2</id>
        <label>KRTAP19-2</label>
    </interactant>
    <organismsDiffer>false</organismsDiffer>
    <experiments>3</experiments>
</comment>
<comment type="interaction">
    <interactant intactId="EBI-17236143">
        <id>Q12837</id>
    </interactant>
    <interactant intactId="EBI-12805508">
        <id>Q3LI70</id>
        <label>KRTAP19-6</label>
    </interactant>
    <organismsDiffer>false</organismsDiffer>
    <experiments>3</experiments>
</comment>
<comment type="interaction">
    <interactant intactId="EBI-17236143">
        <id>Q12837</id>
    </interactant>
    <interactant intactId="EBI-10241353">
        <id>Q3SYF9</id>
        <label>KRTAP19-7</label>
    </interactant>
    <organismsDiffer>false</organismsDiffer>
    <experiments>3</experiments>
</comment>
<comment type="interaction">
    <interactant intactId="EBI-17236143">
        <id>Q12837</id>
    </interactant>
    <interactant intactId="EBI-18395721">
        <id>Q3LI59</id>
        <label>KRTAP21-2</label>
    </interactant>
    <organismsDiffer>false</organismsDiffer>
    <experiments>3</experiments>
</comment>
<comment type="interaction">
    <interactant intactId="EBI-17236143">
        <id>Q12837</id>
    </interactant>
    <interactant intactId="EBI-751260">
        <id>Q9BYR7</id>
        <label>KRTAP3-2</label>
    </interactant>
    <organismsDiffer>false</organismsDiffer>
    <experiments>5</experiments>
</comment>
<comment type="interaction">
    <interactant intactId="EBI-17236143">
        <id>Q12837</id>
    </interactant>
    <interactant intactId="EBI-10302392">
        <id>Q9BYQ6</id>
        <label>KRTAP4-11</label>
    </interactant>
    <organismsDiffer>false</organismsDiffer>
    <experiments>3</experiments>
</comment>
<comment type="interaction">
    <interactant intactId="EBI-17236143">
        <id>Q12837</id>
    </interactant>
    <interactant intactId="EBI-739863">
        <id>Q9BQ66</id>
        <label>KRTAP4-12</label>
    </interactant>
    <organismsDiffer>false</organismsDiffer>
    <experiments>3</experiments>
</comment>
<comment type="interaction">
    <interactant intactId="EBI-17236143">
        <id>Q12837</id>
    </interactant>
    <interactant intactId="EBI-10172511">
        <id>Q9BYR5</id>
        <label>KRTAP4-2</label>
    </interactant>
    <organismsDiffer>false</organismsDiffer>
    <experiments>3</experiments>
</comment>
<comment type="interaction">
    <interactant intactId="EBI-17236143">
        <id>Q12837</id>
    </interactant>
    <interactant intactId="EBI-11958132">
        <id>Q9BYR3</id>
        <label>KRTAP4-4</label>
    </interactant>
    <organismsDiffer>false</organismsDiffer>
    <experiments>3</experiments>
</comment>
<comment type="interaction">
    <interactant intactId="EBI-17236143">
        <id>Q12837</id>
    </interactant>
    <interactant intactId="EBI-11993254">
        <id>Q9BYR2</id>
        <label>KRTAP4-5</label>
    </interactant>
    <organismsDiffer>false</organismsDiffer>
    <experiments>3</experiments>
</comment>
<comment type="interaction">
    <interactant intactId="EBI-17236143">
        <id>Q12837</id>
    </interactant>
    <interactant intactId="EBI-11993296">
        <id>Q6L8G4</id>
        <label>KRTAP5-11</label>
    </interactant>
    <organismsDiffer>false</organismsDiffer>
    <experiments>3</experiments>
</comment>
<comment type="interaction">
    <interactant intactId="EBI-17236143">
        <id>Q12837</id>
    </interactant>
    <interactant intactId="EBI-11974251">
        <id>Q6L8H2</id>
        <label>KRTAP5-3</label>
    </interactant>
    <organismsDiffer>false</organismsDiffer>
    <experiments>3</experiments>
</comment>
<comment type="interaction">
    <interactant intactId="EBI-17236143">
        <id>Q12837</id>
    </interactant>
    <interactant intactId="EBI-11963072">
        <id>Q6L8H1</id>
        <label>KRTAP5-4</label>
    </interactant>
    <organismsDiffer>false</organismsDiffer>
    <experiments>3</experiments>
</comment>
<comment type="interaction">
    <interactant intactId="EBI-17236143">
        <id>Q12837</id>
    </interactant>
    <interactant intactId="EBI-10250562">
        <id>Q6L8G9</id>
        <label>KRTAP5-6</label>
    </interactant>
    <organismsDiffer>false</organismsDiffer>
    <experiments>3</experiments>
</comment>
<comment type="interaction">
    <interactant intactId="EBI-17236143">
        <id>Q12837</id>
    </interactant>
    <interactant intactId="EBI-3958099">
        <id>P26371</id>
        <label>KRTAP5-9</label>
    </interactant>
    <organismsDiffer>false</organismsDiffer>
    <experiments>3</experiments>
</comment>
<comment type="interaction">
    <interactant intactId="EBI-17236143">
        <id>Q12837</id>
    </interactant>
    <interactant intactId="EBI-12111050">
        <id>Q3LI64</id>
        <label>KRTAP6-1</label>
    </interactant>
    <organismsDiffer>false</organismsDiffer>
    <experiments>3</experiments>
</comment>
<comment type="interaction">
    <interactant intactId="EBI-17236143">
        <id>Q12837</id>
    </interactant>
    <interactant intactId="EBI-22311199">
        <id>Q3LI67</id>
        <label>KRTAP6-3</label>
    </interactant>
    <organismsDiffer>false</organismsDiffer>
    <experiments>3</experiments>
</comment>
<comment type="interaction">
    <interactant intactId="EBI-17236143">
        <id>Q12837</id>
    </interactant>
    <interactant intactId="EBI-1044640">
        <id>Q9BYQ4</id>
        <label>KRTAP9-2</label>
    </interactant>
    <organismsDiffer>false</organismsDiffer>
    <experiments>6</experiments>
</comment>
<comment type="interaction">
    <interactant intactId="EBI-17236143">
        <id>Q12837</id>
    </interactant>
    <interactant intactId="EBI-1043191">
        <id>Q9BYQ3</id>
        <label>KRTAP9-3</label>
    </interactant>
    <organismsDiffer>false</organismsDiffer>
    <experiments>3</experiments>
</comment>
<comment type="interaction">
    <interactant intactId="EBI-17236143">
        <id>Q12837</id>
    </interactant>
    <interactant intactId="EBI-11958364">
        <id>Q9BYQ0</id>
        <label>KRTAP9-8</label>
    </interactant>
    <organismsDiffer>false</organismsDiffer>
    <experiments>3</experiments>
</comment>
<comment type="interaction">
    <interactant intactId="EBI-17236143">
        <id>Q12837</id>
    </interactant>
    <interactant intactId="EBI-12224199">
        <id>Q5T751</id>
        <label>LCE1C</label>
    </interactant>
    <organismsDiffer>false</organismsDiffer>
    <experiments>3</experiments>
</comment>
<comment type="interaction">
    <interactant intactId="EBI-17236143">
        <id>Q12837</id>
    </interactant>
    <interactant intactId="EBI-11958008">
        <id>Q5T754</id>
        <label>LCE1F</label>
    </interactant>
    <organismsDiffer>false</organismsDiffer>
    <experiments>3</experiments>
</comment>
<comment type="interaction">
    <interactant intactId="EBI-17236143">
        <id>Q12837</id>
    </interactant>
    <interactant intactId="EBI-11955689">
        <id>Q5TCM9</id>
        <label>LCE5A</label>
    </interactant>
    <organismsDiffer>false</organismsDiffer>
    <experiments>3</experiments>
</comment>
<comment type="interaction">
    <interactant intactId="EBI-17236143">
        <id>Q12837</id>
    </interactant>
    <interactant intactId="EBI-11911016">
        <id>P80188</id>
        <label>LCN2</label>
    </interactant>
    <organismsDiffer>false</organismsDiffer>
    <experiments>3</experiments>
</comment>
<comment type="interaction">
    <interactant intactId="EBI-17236143">
        <id>Q12837</id>
    </interactant>
    <interactant intactId="EBI-3957707">
        <id>Q9UHV8</id>
        <label>LGALS13</label>
    </interactant>
    <organismsDiffer>false</organismsDiffer>
    <experiments>3</experiments>
</comment>
<comment type="interaction">
    <interactant intactId="EBI-17236143">
        <id>Q12837</id>
    </interactant>
    <interactant intactId="EBI-12179869">
        <id>P50458</id>
        <label>LHX2</label>
    </interactant>
    <organismsDiffer>false</organismsDiffer>
    <experiments>3</experiments>
</comment>
<comment type="interaction">
    <interactant intactId="EBI-17236143">
        <id>Q12837</id>
    </interactant>
    <interactant intactId="EBI-18270828">
        <id>Q6UXB3</id>
        <label>LYPD2</label>
    </interactant>
    <organismsDiffer>false</organismsDiffer>
    <experiments>3</experiments>
</comment>
<comment type="interaction">
    <interactant intactId="EBI-17236143">
        <id>Q12837</id>
    </interactant>
    <interactant intactId="EBI-11111575">
        <id>Q9H3L0</id>
        <label>MMADHC</label>
    </interactant>
    <organismsDiffer>false</organismsDiffer>
    <experiments>3</experiments>
</comment>
<comment type="interaction">
    <interactant intactId="EBI-17236143">
        <id>Q12837</id>
    </interactant>
    <interactant intactId="EBI-10271199">
        <id>Q8NI38</id>
        <label>NFKBID</label>
    </interactant>
    <organismsDiffer>false</organismsDiffer>
    <experiments>3</experiments>
</comment>
<comment type="interaction">
    <interactant intactId="EBI-17236143">
        <id>Q12837</id>
    </interactant>
    <interactant intactId="EBI-17490746">
        <id>A8MTQ0</id>
        <label>NOTO</label>
    </interactant>
    <organismsDiffer>false</organismsDiffer>
    <experiments>3</experiments>
</comment>
<comment type="interaction">
    <interactant intactId="EBI-17236143">
        <id>Q12837</id>
    </interactant>
    <interactant intactId="EBI-11956269">
        <id>Q92824-2</id>
        <label>PCSK5</label>
    </interactant>
    <organismsDiffer>false</organismsDiffer>
    <experiments>6</experiments>
</comment>
<comment type="interaction">
    <interactant intactId="EBI-17236143">
        <id>Q12837</id>
    </interactant>
    <interactant intactId="EBI-3937430">
        <id>Q9NRY7</id>
        <label>PLSCR2</label>
    </interactant>
    <organismsDiffer>false</organismsDiffer>
    <experiments>5</experiments>
</comment>
<comment type="interaction">
    <interactant intactId="EBI-17236143">
        <id>Q12837</id>
    </interactant>
    <interactant intactId="EBI-12806054">
        <id>P10745</id>
        <label>RBP3</label>
    </interactant>
    <organismsDiffer>false</organismsDiffer>
    <experiments>3</experiments>
</comment>
<comment type="interaction">
    <interactant intactId="EBI-17236143">
        <id>Q12837</id>
    </interactant>
    <interactant intactId="EBI-740343">
        <id>Q93062-3</id>
        <label>RBPMS</label>
    </interactant>
    <organismsDiffer>false</organismsDiffer>
    <experiments>3</experiments>
</comment>
<comment type="interaction">
    <interactant intactId="EBI-17236143">
        <id>Q12837</id>
    </interactant>
    <interactant intactId="EBI-874907">
        <id>P49795</id>
        <label>RGS19</label>
    </interactant>
    <organismsDiffer>false</organismsDiffer>
    <experiments>3</experiments>
</comment>
<comment type="interaction">
    <interactant intactId="EBI-17236143">
        <id>Q12837</id>
    </interactant>
    <interactant intactId="EBI-354861">
        <id>Q9C004</id>
        <label>SPRY4</label>
    </interactant>
    <organismsDiffer>false</organismsDiffer>
    <experiments>3</experiments>
</comment>
<comment type="interaction">
    <interactant intactId="EBI-17236143">
        <id>Q12837</id>
    </interactant>
    <interactant intactId="EBI-779636">
        <id>P01137</id>
        <label>TGFB1</label>
    </interactant>
    <organismsDiffer>false</organismsDiffer>
    <experiments>3</experiments>
</comment>
<comment type="interaction">
    <interactant intactId="EBI-17236143">
        <id>Q12837</id>
    </interactant>
    <interactant intactId="EBI-5235829">
        <id>Q8IWZ5</id>
        <label>TRIM42</label>
    </interactant>
    <organismsDiffer>false</organismsDiffer>
    <experiments>5</experiments>
</comment>
<comment type="interaction">
    <interactant intactId="EBI-17236143">
        <id>Q12837</id>
    </interactant>
    <interactant intactId="EBI-11957238">
        <id>Q2TAL6</id>
        <label>VWC2</label>
    </interactant>
    <organismsDiffer>false</organismsDiffer>
    <experiments>3</experiments>
</comment>
<comment type="subcellular location">
    <subcellularLocation>
        <location evidence="7">Nucleus</location>
    </subcellularLocation>
    <subcellularLocation>
        <location evidence="5">Nucleus speckle</location>
    </subcellularLocation>
    <subcellularLocation>
        <location evidence="1">Cytoplasm</location>
    </subcellularLocation>
</comment>
<comment type="alternative products">
    <event type="alternative splicing"/>
    <isoform>
        <id>Q12837-1</id>
        <name>1</name>
        <name evidence="8">Brn-3b long</name>
        <name evidence="8">Brn-3b-l</name>
        <sequence type="displayed"/>
    </isoform>
    <isoform>
        <id>Q12837-2</id>
        <name>2</name>
        <name evidence="8">Brn-3b short</name>
        <name evidence="8">Brn-3b-s</name>
        <sequence type="described" ref="VSP_058837"/>
    </isoform>
</comment>
<comment type="tissue specificity">
    <text evidence="7">Expressed in the brain (PubMed:7691107). Expressed in the ganglion cell layer of the retina (PubMed:7691107).</text>
</comment>
<comment type="domain">
    <text evidence="1">The N-terminal transcriptional activation region is sufficient to induce transcriptional activity.</text>
</comment>
<comment type="domain">
    <text evidence="1">The POU-specific domain and POU homeodomain regions are necessary for DNA-binding activity and transcriptional repression.</text>
</comment>
<comment type="domain">
    <text evidence="5">The polyhistidine motif acts as a targeting signal to nuclear speckles.</text>
</comment>
<comment type="similarity">
    <text evidence="9">Belongs to the POU transcription factor family. Class-4 subfamily.</text>
</comment>
<gene>
    <name evidence="10" type="primary">POU4F2</name>
    <name type="synonym">BRN3B</name>
</gene>
<name>PO4F2_HUMAN</name>
<dbReference type="EMBL" id="U06233">
    <property type="protein sequence ID" value="AAA16509.1"/>
    <property type="molecule type" value="mRNA"/>
</dbReference>
<dbReference type="EMBL" id="AK314982">
    <property type="protein sequence ID" value="BAG37481.1"/>
    <property type="molecule type" value="mRNA"/>
</dbReference>
<dbReference type="EMBL" id="AC093887">
    <property type="status" value="NOT_ANNOTATED_CDS"/>
    <property type="molecule type" value="Genomic_DNA"/>
</dbReference>
<dbReference type="EMBL" id="BC136344">
    <property type="protein sequence ID" value="AAI36345.1"/>
    <property type="molecule type" value="mRNA"/>
</dbReference>
<dbReference type="EMBL" id="BC136345">
    <property type="protein sequence ID" value="AAI36346.1"/>
    <property type="molecule type" value="mRNA"/>
</dbReference>
<dbReference type="EMBL" id="EU439706">
    <property type="protein sequence ID" value="ACA49233.1"/>
    <property type="molecule type" value="mRNA"/>
</dbReference>
<dbReference type="EMBL" id="X71488">
    <property type="protein sequence ID" value="CAA50589.1"/>
    <property type="molecule type" value="mRNA"/>
</dbReference>
<dbReference type="EMBL" id="L20434">
    <property type="protein sequence ID" value="AAA36393.1"/>
    <property type="molecule type" value="mRNA"/>
</dbReference>
<dbReference type="CCDS" id="CCDS34074.1">
    <molecule id="Q12837-1"/>
</dbReference>
<dbReference type="PIR" id="I38502">
    <property type="entry name" value="I38502"/>
</dbReference>
<dbReference type="RefSeq" id="NP_004566.2">
    <molecule id="Q12837-1"/>
    <property type="nucleotide sequence ID" value="NM_004575.3"/>
</dbReference>
<dbReference type="SMR" id="Q12837"/>
<dbReference type="BioGRID" id="111454">
    <property type="interactions" value="79"/>
</dbReference>
<dbReference type="FunCoup" id="Q12837">
    <property type="interactions" value="1489"/>
</dbReference>
<dbReference type="IntAct" id="Q12837">
    <property type="interactions" value="73"/>
</dbReference>
<dbReference type="MINT" id="Q12837"/>
<dbReference type="STRING" id="9606.ENSP00000281321"/>
<dbReference type="GlyGen" id="Q12837">
    <property type="glycosylation" value="3 sites, 2 O-linked glycans (2 sites)"/>
</dbReference>
<dbReference type="iPTMnet" id="Q12837"/>
<dbReference type="PhosphoSitePlus" id="Q12837"/>
<dbReference type="BioMuta" id="POU4F2"/>
<dbReference type="DMDM" id="290457652"/>
<dbReference type="jPOST" id="Q12837"/>
<dbReference type="MassIVE" id="Q12837"/>
<dbReference type="PaxDb" id="9606-ENSP00000281321"/>
<dbReference type="PeptideAtlas" id="Q12837"/>
<dbReference type="Antibodypedia" id="16443">
    <property type="antibodies" value="167 antibodies from 24 providers"/>
</dbReference>
<dbReference type="DNASU" id="5458"/>
<dbReference type="Ensembl" id="ENST00000281321.3">
    <molecule id="Q12837-1"/>
    <property type="protein sequence ID" value="ENSP00000281321.3"/>
    <property type="gene ID" value="ENSG00000151615.3"/>
</dbReference>
<dbReference type="GeneID" id="5458"/>
<dbReference type="KEGG" id="hsa:5458"/>
<dbReference type="MANE-Select" id="ENST00000281321.3">
    <property type="protein sequence ID" value="ENSP00000281321.3"/>
    <property type="RefSeq nucleotide sequence ID" value="NM_004575.3"/>
    <property type="RefSeq protein sequence ID" value="NP_004566.2"/>
</dbReference>
<dbReference type="UCSC" id="uc003ikv.4">
    <molecule id="Q12837-1"/>
    <property type="organism name" value="human"/>
</dbReference>
<dbReference type="AGR" id="HGNC:9219"/>
<dbReference type="CTD" id="5458"/>
<dbReference type="DisGeNET" id="5458"/>
<dbReference type="GeneCards" id="POU4F2"/>
<dbReference type="HGNC" id="HGNC:9219">
    <property type="gene designation" value="POU4F2"/>
</dbReference>
<dbReference type="HPA" id="ENSG00000151615">
    <property type="expression patterns" value="Tissue enhanced (retina, testis)"/>
</dbReference>
<dbReference type="MIM" id="113725">
    <property type="type" value="gene"/>
</dbReference>
<dbReference type="neXtProt" id="NX_Q12837"/>
<dbReference type="OpenTargets" id="ENSG00000151615"/>
<dbReference type="PharmGKB" id="PA33543"/>
<dbReference type="VEuPathDB" id="HostDB:ENSG00000151615"/>
<dbReference type="eggNOG" id="KOG1168">
    <property type="taxonomic scope" value="Eukaryota"/>
</dbReference>
<dbReference type="GeneTree" id="ENSGT00940000160339"/>
<dbReference type="HOGENOM" id="CLU_013065_0_0_1"/>
<dbReference type="InParanoid" id="Q12837"/>
<dbReference type="OMA" id="ETMRRAC"/>
<dbReference type="OrthoDB" id="6358449at2759"/>
<dbReference type="PAN-GO" id="Q12837">
    <property type="GO annotations" value="3 GO annotations based on evolutionary models"/>
</dbReference>
<dbReference type="PhylomeDB" id="Q12837"/>
<dbReference type="TreeFam" id="TF316413"/>
<dbReference type="PathwayCommons" id="Q12837"/>
<dbReference type="Reactome" id="R-HSA-6804759">
    <property type="pathway name" value="Regulation of TP53 Activity through Association with Co-factors"/>
</dbReference>
<dbReference type="SignaLink" id="Q12837"/>
<dbReference type="SIGNOR" id="Q12837"/>
<dbReference type="BioGRID-ORCS" id="5458">
    <property type="hits" value="9 hits in 1166 CRISPR screens"/>
</dbReference>
<dbReference type="CD-CODE" id="804901D1">
    <property type="entry name" value="Nuclear speckle"/>
</dbReference>
<dbReference type="GeneWiki" id="POU4F2"/>
<dbReference type="GenomeRNAi" id="5458"/>
<dbReference type="Pharos" id="Q12837">
    <property type="development level" value="Tbio"/>
</dbReference>
<dbReference type="PRO" id="PR:Q12837"/>
<dbReference type="Proteomes" id="UP000005640">
    <property type="component" value="Chromosome 4"/>
</dbReference>
<dbReference type="RNAct" id="Q12837">
    <property type="molecule type" value="protein"/>
</dbReference>
<dbReference type="Bgee" id="ENSG00000151615">
    <property type="expression patterns" value="Expressed in secondary oocyte and 17 other cell types or tissues"/>
</dbReference>
<dbReference type="GO" id="GO:0000785">
    <property type="term" value="C:chromatin"/>
    <property type="evidence" value="ECO:0000247"/>
    <property type="project" value="NTNU_SB"/>
</dbReference>
<dbReference type="GO" id="GO:0005737">
    <property type="term" value="C:cytoplasm"/>
    <property type="evidence" value="ECO:0000250"/>
    <property type="project" value="UniProtKB"/>
</dbReference>
<dbReference type="GO" id="GO:0000791">
    <property type="term" value="C:euchromatin"/>
    <property type="evidence" value="ECO:0007669"/>
    <property type="project" value="Ensembl"/>
</dbReference>
<dbReference type="GO" id="GO:0016607">
    <property type="term" value="C:nuclear speck"/>
    <property type="evidence" value="ECO:0000314"/>
    <property type="project" value="UniProtKB"/>
</dbReference>
<dbReference type="GO" id="GO:0005654">
    <property type="term" value="C:nucleoplasm"/>
    <property type="evidence" value="ECO:0000304"/>
    <property type="project" value="Reactome"/>
</dbReference>
<dbReference type="GO" id="GO:0005634">
    <property type="term" value="C:nucleus"/>
    <property type="evidence" value="ECO:0000314"/>
    <property type="project" value="UniProtKB"/>
</dbReference>
<dbReference type="GO" id="GO:0005667">
    <property type="term" value="C:transcription regulator complex"/>
    <property type="evidence" value="ECO:0000316"/>
    <property type="project" value="ARUK-UCL"/>
</dbReference>
<dbReference type="GO" id="GO:0001228">
    <property type="term" value="F:DNA-binding transcription activator activity, RNA polymerase II-specific"/>
    <property type="evidence" value="ECO:0000314"/>
    <property type="project" value="UniProtKB"/>
</dbReference>
<dbReference type="GO" id="GO:0000981">
    <property type="term" value="F:DNA-binding transcription factor activity, RNA polymerase II-specific"/>
    <property type="evidence" value="ECO:0000314"/>
    <property type="project" value="ParkinsonsUK-UCL"/>
</dbReference>
<dbReference type="GO" id="GO:0001227">
    <property type="term" value="F:DNA-binding transcription repressor activity, RNA polymerase II-specific"/>
    <property type="evidence" value="ECO:0000250"/>
    <property type="project" value="UniProtKB"/>
</dbReference>
<dbReference type="GO" id="GO:0002039">
    <property type="term" value="F:p53 binding"/>
    <property type="evidence" value="ECO:0007669"/>
    <property type="project" value="Ensembl"/>
</dbReference>
<dbReference type="GO" id="GO:1990841">
    <property type="term" value="F:promoter-specific chromatin binding"/>
    <property type="evidence" value="ECO:0000250"/>
    <property type="project" value="UniProtKB"/>
</dbReference>
<dbReference type="GO" id="GO:0000978">
    <property type="term" value="F:RNA polymerase II cis-regulatory region sequence-specific DNA binding"/>
    <property type="evidence" value="ECO:0000314"/>
    <property type="project" value="UniProtKB"/>
</dbReference>
<dbReference type="GO" id="GO:0048675">
    <property type="term" value="P:axon extension"/>
    <property type="evidence" value="ECO:0007669"/>
    <property type="project" value="Ensembl"/>
</dbReference>
<dbReference type="GO" id="GO:0007411">
    <property type="term" value="P:axon guidance"/>
    <property type="evidence" value="ECO:0000250"/>
    <property type="project" value="UniProtKB"/>
</dbReference>
<dbReference type="GO" id="GO:0071345">
    <property type="term" value="P:cellular response to cytokine stimulus"/>
    <property type="evidence" value="ECO:0000250"/>
    <property type="project" value="UniProtKB"/>
</dbReference>
<dbReference type="GO" id="GO:0071392">
    <property type="term" value="P:cellular response to estradiol stimulus"/>
    <property type="evidence" value="ECO:0000250"/>
    <property type="project" value="UniProtKB"/>
</dbReference>
<dbReference type="GO" id="GO:0032869">
    <property type="term" value="P:cellular response to insulin stimulus"/>
    <property type="evidence" value="ECO:0007669"/>
    <property type="project" value="Ensembl"/>
</dbReference>
<dbReference type="GO" id="GO:1990791">
    <property type="term" value="P:dorsal root ganglion development"/>
    <property type="evidence" value="ECO:0000250"/>
    <property type="project" value="UniProtKB"/>
</dbReference>
<dbReference type="GO" id="GO:0030520">
    <property type="term" value="P:estrogen receptor signaling pathway"/>
    <property type="evidence" value="ECO:0000314"/>
    <property type="project" value="UniProtKB"/>
</dbReference>
<dbReference type="GO" id="GO:0007507">
    <property type="term" value="P:heart development"/>
    <property type="evidence" value="ECO:0000250"/>
    <property type="project" value="ARUK-UCL"/>
</dbReference>
<dbReference type="GO" id="GO:0072332">
    <property type="term" value="P:intrinsic apoptotic signaling pathway by p53 class mediator"/>
    <property type="evidence" value="ECO:0000250"/>
    <property type="project" value="UniProtKB"/>
</dbReference>
<dbReference type="GO" id="GO:0000165">
    <property type="term" value="P:MAPK cascade"/>
    <property type="evidence" value="ECO:0000314"/>
    <property type="project" value="UniProtKB"/>
</dbReference>
<dbReference type="GO" id="GO:1904178">
    <property type="term" value="P:negative regulation of adipose tissue development"/>
    <property type="evidence" value="ECO:0007669"/>
    <property type="project" value="Ensembl"/>
</dbReference>
<dbReference type="GO" id="GO:1902870">
    <property type="term" value="P:negative regulation of amacrine cell differentiation"/>
    <property type="evidence" value="ECO:0000250"/>
    <property type="project" value="UniProtKB"/>
</dbReference>
<dbReference type="GO" id="GO:0045596">
    <property type="term" value="P:negative regulation of cell differentiation"/>
    <property type="evidence" value="ECO:0000250"/>
    <property type="project" value="UniProtKB"/>
</dbReference>
<dbReference type="GO" id="GO:0043433">
    <property type="term" value="P:negative regulation of DNA-binding transcription factor activity"/>
    <property type="evidence" value="ECO:0000250"/>
    <property type="project" value="UniProtKB"/>
</dbReference>
<dbReference type="GO" id="GO:0000122">
    <property type="term" value="P:negative regulation of transcription by RNA polymerase II"/>
    <property type="evidence" value="ECO:0000314"/>
    <property type="project" value="ParkinsonsUK-UCL"/>
</dbReference>
<dbReference type="GO" id="GO:0050885">
    <property type="term" value="P:neuromuscular process controlling balance"/>
    <property type="evidence" value="ECO:0007669"/>
    <property type="project" value="Ensembl"/>
</dbReference>
<dbReference type="GO" id="GO:0030182">
    <property type="term" value="P:neuron differentiation"/>
    <property type="evidence" value="ECO:0000250"/>
    <property type="project" value="UniProtKB"/>
</dbReference>
<dbReference type="GO" id="GO:0045773">
    <property type="term" value="P:positive regulation of axon extension"/>
    <property type="evidence" value="ECO:0000250"/>
    <property type="project" value="UniProtKB"/>
</dbReference>
<dbReference type="GO" id="GO:0045597">
    <property type="term" value="P:positive regulation of cell differentiation"/>
    <property type="evidence" value="ECO:0000250"/>
    <property type="project" value="UniProtKB"/>
</dbReference>
<dbReference type="GO" id="GO:0046326">
    <property type="term" value="P:positive regulation of D-glucose import"/>
    <property type="evidence" value="ECO:0007669"/>
    <property type="project" value="Ensembl"/>
</dbReference>
<dbReference type="GO" id="GO:0045672">
    <property type="term" value="P:positive regulation of osteoclast differentiation"/>
    <property type="evidence" value="ECO:0000250"/>
    <property type="project" value="UniProtKB"/>
</dbReference>
<dbReference type="GO" id="GO:0043068">
    <property type="term" value="P:positive regulation of programmed cell death"/>
    <property type="evidence" value="ECO:0000250"/>
    <property type="project" value="UniProtKB"/>
</dbReference>
<dbReference type="GO" id="GO:0045944">
    <property type="term" value="P:positive regulation of transcription by RNA polymerase II"/>
    <property type="evidence" value="ECO:0000314"/>
    <property type="project" value="ParkinsonsUK-UCL"/>
</dbReference>
<dbReference type="GO" id="GO:2000679">
    <property type="term" value="P:positive regulation of transcription regulatory region DNA binding"/>
    <property type="evidence" value="ECO:0000250"/>
    <property type="project" value="UniProtKB"/>
</dbReference>
<dbReference type="GO" id="GO:0051090">
    <property type="term" value="P:regulation of DNA-binding transcription factor activity"/>
    <property type="evidence" value="ECO:0000250"/>
    <property type="project" value="UniProtKB"/>
</dbReference>
<dbReference type="GO" id="GO:0090259">
    <property type="term" value="P:regulation of retinal ganglion cell axon guidance"/>
    <property type="evidence" value="ECO:0000250"/>
    <property type="project" value="UniProtKB"/>
</dbReference>
<dbReference type="GO" id="GO:0006357">
    <property type="term" value="P:regulation of transcription by RNA polymerase II"/>
    <property type="evidence" value="ECO:0000318"/>
    <property type="project" value="GO_Central"/>
</dbReference>
<dbReference type="GO" id="GO:0060041">
    <property type="term" value="P:retina development in camera-type eye"/>
    <property type="evidence" value="ECO:0000250"/>
    <property type="project" value="UniProtKB"/>
</dbReference>
<dbReference type="GO" id="GO:0031290">
    <property type="term" value="P:retinal ganglion cell axon guidance"/>
    <property type="evidence" value="ECO:0007669"/>
    <property type="project" value="Ensembl"/>
</dbReference>
<dbReference type="GO" id="GO:0007605">
    <property type="term" value="P:sensory perception of sound"/>
    <property type="evidence" value="ECO:0007669"/>
    <property type="project" value="Ensembl"/>
</dbReference>
<dbReference type="CDD" id="cd00086">
    <property type="entry name" value="homeodomain"/>
    <property type="match status" value="1"/>
</dbReference>
<dbReference type="FunFam" id="1.10.10.60:FF:000056">
    <property type="entry name" value="POU domain protein"/>
    <property type="match status" value="1"/>
</dbReference>
<dbReference type="FunFam" id="1.10.260.40:FF:000007">
    <property type="entry name" value="POU domain protein"/>
    <property type="match status" value="1"/>
</dbReference>
<dbReference type="Gene3D" id="1.10.10.60">
    <property type="entry name" value="Homeodomain-like"/>
    <property type="match status" value="1"/>
</dbReference>
<dbReference type="Gene3D" id="1.10.260.40">
    <property type="entry name" value="lambda repressor-like DNA-binding domains"/>
    <property type="match status" value="1"/>
</dbReference>
<dbReference type="InterPro" id="IPR001356">
    <property type="entry name" value="HD"/>
</dbReference>
<dbReference type="InterPro" id="IPR017970">
    <property type="entry name" value="Homeobox_CS"/>
</dbReference>
<dbReference type="InterPro" id="IPR009057">
    <property type="entry name" value="Homeodomain-like_sf"/>
</dbReference>
<dbReference type="InterPro" id="IPR010982">
    <property type="entry name" value="Lambda_DNA-bd_dom_sf"/>
</dbReference>
<dbReference type="InterPro" id="IPR013847">
    <property type="entry name" value="POU"/>
</dbReference>
<dbReference type="InterPro" id="IPR000327">
    <property type="entry name" value="POU_dom"/>
</dbReference>
<dbReference type="InterPro" id="IPR050255">
    <property type="entry name" value="POU_domain_TF"/>
</dbReference>
<dbReference type="PANTHER" id="PTHR11636">
    <property type="entry name" value="POU DOMAIN"/>
    <property type="match status" value="1"/>
</dbReference>
<dbReference type="PANTHER" id="PTHR11636:SF41">
    <property type="entry name" value="POU DOMAIN, CLASS 4, TRANSCRIPTION FACTOR 2"/>
    <property type="match status" value="1"/>
</dbReference>
<dbReference type="Pfam" id="PF00046">
    <property type="entry name" value="Homeodomain"/>
    <property type="match status" value="1"/>
</dbReference>
<dbReference type="Pfam" id="PF00157">
    <property type="entry name" value="Pou"/>
    <property type="match status" value="1"/>
</dbReference>
<dbReference type="PRINTS" id="PR00028">
    <property type="entry name" value="POUDOMAIN"/>
</dbReference>
<dbReference type="SMART" id="SM00389">
    <property type="entry name" value="HOX"/>
    <property type="match status" value="1"/>
</dbReference>
<dbReference type="SMART" id="SM00352">
    <property type="entry name" value="POU"/>
    <property type="match status" value="1"/>
</dbReference>
<dbReference type="SUPFAM" id="SSF46689">
    <property type="entry name" value="Homeodomain-like"/>
    <property type="match status" value="1"/>
</dbReference>
<dbReference type="SUPFAM" id="SSF47413">
    <property type="entry name" value="lambda repressor-like DNA-binding domains"/>
    <property type="match status" value="1"/>
</dbReference>
<dbReference type="PROSITE" id="PS00027">
    <property type="entry name" value="HOMEOBOX_1"/>
    <property type="match status" value="1"/>
</dbReference>
<dbReference type="PROSITE" id="PS50071">
    <property type="entry name" value="HOMEOBOX_2"/>
    <property type="match status" value="1"/>
</dbReference>
<dbReference type="PROSITE" id="PS00035">
    <property type="entry name" value="POU_1"/>
    <property type="match status" value="1"/>
</dbReference>
<dbReference type="PROSITE" id="PS00465">
    <property type="entry name" value="POU_2"/>
    <property type="match status" value="1"/>
</dbReference>
<dbReference type="PROSITE" id="PS51179">
    <property type="entry name" value="POU_3"/>
    <property type="match status" value="1"/>
</dbReference>
<keyword id="KW-0010">Activator</keyword>
<keyword id="KW-0025">Alternative splicing</keyword>
<keyword id="KW-0053">Apoptosis</keyword>
<keyword id="KW-0963">Cytoplasm</keyword>
<keyword id="KW-0217">Developmental protein</keyword>
<keyword id="KW-0221">Differentiation</keyword>
<keyword id="KW-0238">DNA-binding</keyword>
<keyword id="KW-0371">Homeobox</keyword>
<keyword id="KW-0539">Nucleus</keyword>
<keyword id="KW-1267">Proteomics identification</keyword>
<keyword id="KW-1185">Reference proteome</keyword>
<keyword id="KW-0678">Repressor</keyword>
<keyword id="KW-0804">Transcription</keyword>
<keyword id="KW-0805">Transcription regulation</keyword>
<proteinExistence type="evidence at protein level"/>
<accession>Q12837</accession>
<accession>B1PJR6</accession>
<accession>B2RC84</accession>
<accession>Q13883</accession>
<accession>Q14987</accession>
<evidence type="ECO:0000250" key="1">
    <source>
        <dbReference type="UniProtKB" id="Q63934"/>
    </source>
</evidence>
<evidence type="ECO:0000255" key="2">
    <source>
        <dbReference type="PROSITE-ProRule" id="PRU00108"/>
    </source>
</evidence>
<evidence type="ECO:0000255" key="3">
    <source>
        <dbReference type="PROSITE-ProRule" id="PRU00530"/>
    </source>
</evidence>
<evidence type="ECO:0000256" key="4">
    <source>
        <dbReference type="SAM" id="MobiDB-lite"/>
    </source>
</evidence>
<evidence type="ECO:0000269" key="5">
    <source>
    </source>
</evidence>
<evidence type="ECO:0000269" key="6">
    <source>
    </source>
</evidence>
<evidence type="ECO:0000269" key="7">
    <source>
    </source>
</evidence>
<evidence type="ECO:0000303" key="8">
    <source>
    </source>
</evidence>
<evidence type="ECO:0000305" key="9"/>
<evidence type="ECO:0000312" key="10">
    <source>
        <dbReference type="HGNC" id="HGNC:9219"/>
    </source>
</evidence>
<reference key="1">
    <citation type="journal article" date="1993" name="Neuron">
        <title>Brn-3b: a POU domain gene expressed in a subset of retinal ganglion cells.</title>
        <authorList>
            <person name="Xiang M."/>
            <person name="Zhou L.-J."/>
            <person name="Peng Y."/>
            <person name="Eddy R.L."/>
            <person name="Shows T.B."/>
            <person name="Nathans J."/>
        </authorList>
    </citation>
    <scope>NUCLEOTIDE SEQUENCE [MRNA] (ISOFORM 1)</scope>
    <scope>SUBCELLULAR LOCATION</scope>
    <scope>TISSUE SPECIFICITY</scope>
    <source>
        <tissue>Retina</tissue>
    </source>
</reference>
<reference key="2">
    <citation type="journal article" date="1993" name="Nucleic Acids Res.">
        <title>The human Brn-3b POU transcription factor shows only limited homology to the Brn-3a/RDC-1 factor outside the conserved POU domain.</title>
        <authorList>
            <person name="Ring C.J.A."/>
            <person name="Latchman D.S."/>
        </authorList>
    </citation>
    <scope>NUCLEOTIDE SEQUENCE [MRNA] (ISOFORM 2)</scope>
    <source>
        <tissue>Testis</tissue>
    </source>
</reference>
<reference key="3">
    <citation type="journal article" date="2004" name="Nat. Genet.">
        <title>Complete sequencing and characterization of 21,243 full-length human cDNAs.</title>
        <authorList>
            <person name="Ota T."/>
            <person name="Suzuki Y."/>
            <person name="Nishikawa T."/>
            <person name="Otsuki T."/>
            <person name="Sugiyama T."/>
            <person name="Irie R."/>
            <person name="Wakamatsu A."/>
            <person name="Hayashi K."/>
            <person name="Sato H."/>
            <person name="Nagai K."/>
            <person name="Kimura K."/>
            <person name="Makita H."/>
            <person name="Sekine M."/>
            <person name="Obayashi M."/>
            <person name="Nishi T."/>
            <person name="Shibahara T."/>
            <person name="Tanaka T."/>
            <person name="Ishii S."/>
            <person name="Yamamoto J."/>
            <person name="Saito K."/>
            <person name="Kawai Y."/>
            <person name="Isono Y."/>
            <person name="Nakamura Y."/>
            <person name="Nagahari K."/>
            <person name="Murakami K."/>
            <person name="Yasuda T."/>
            <person name="Iwayanagi T."/>
            <person name="Wagatsuma M."/>
            <person name="Shiratori A."/>
            <person name="Sudo H."/>
            <person name="Hosoiri T."/>
            <person name="Kaku Y."/>
            <person name="Kodaira H."/>
            <person name="Kondo H."/>
            <person name="Sugawara M."/>
            <person name="Takahashi M."/>
            <person name="Kanda K."/>
            <person name="Yokoi T."/>
            <person name="Furuya T."/>
            <person name="Kikkawa E."/>
            <person name="Omura Y."/>
            <person name="Abe K."/>
            <person name="Kamihara K."/>
            <person name="Katsuta N."/>
            <person name="Sato K."/>
            <person name="Tanikawa M."/>
            <person name="Yamazaki M."/>
            <person name="Ninomiya K."/>
            <person name="Ishibashi T."/>
            <person name="Yamashita H."/>
            <person name="Murakawa K."/>
            <person name="Fujimori K."/>
            <person name="Tanai H."/>
            <person name="Kimata M."/>
            <person name="Watanabe M."/>
            <person name="Hiraoka S."/>
            <person name="Chiba Y."/>
            <person name="Ishida S."/>
            <person name="Ono Y."/>
            <person name="Takiguchi S."/>
            <person name="Watanabe S."/>
            <person name="Yosida M."/>
            <person name="Hotuta T."/>
            <person name="Kusano J."/>
            <person name="Kanehori K."/>
            <person name="Takahashi-Fujii A."/>
            <person name="Hara H."/>
            <person name="Tanase T.-O."/>
            <person name="Nomura Y."/>
            <person name="Togiya S."/>
            <person name="Komai F."/>
            <person name="Hara R."/>
            <person name="Takeuchi K."/>
            <person name="Arita M."/>
            <person name="Imose N."/>
            <person name="Musashino K."/>
            <person name="Yuuki H."/>
            <person name="Oshima A."/>
            <person name="Sasaki N."/>
            <person name="Aotsuka S."/>
            <person name="Yoshikawa Y."/>
            <person name="Matsunawa H."/>
            <person name="Ichihara T."/>
            <person name="Shiohata N."/>
            <person name="Sano S."/>
            <person name="Moriya S."/>
            <person name="Momiyama H."/>
            <person name="Satoh N."/>
            <person name="Takami S."/>
            <person name="Terashima Y."/>
            <person name="Suzuki O."/>
            <person name="Nakagawa S."/>
            <person name="Senoh A."/>
            <person name="Mizoguchi H."/>
            <person name="Goto Y."/>
            <person name="Shimizu F."/>
            <person name="Wakebe H."/>
            <person name="Hishigaki H."/>
            <person name="Watanabe T."/>
            <person name="Sugiyama A."/>
            <person name="Takemoto M."/>
            <person name="Kawakami B."/>
            <person name="Yamazaki M."/>
            <person name="Watanabe K."/>
            <person name="Kumagai A."/>
            <person name="Itakura S."/>
            <person name="Fukuzumi Y."/>
            <person name="Fujimori Y."/>
            <person name="Komiyama M."/>
            <person name="Tashiro H."/>
            <person name="Tanigami A."/>
            <person name="Fujiwara T."/>
            <person name="Ono T."/>
            <person name="Yamada K."/>
            <person name="Fujii Y."/>
            <person name="Ozaki K."/>
            <person name="Hirao M."/>
            <person name="Ohmori Y."/>
            <person name="Kawabata A."/>
            <person name="Hikiji T."/>
            <person name="Kobatake N."/>
            <person name="Inagaki H."/>
            <person name="Ikema Y."/>
            <person name="Okamoto S."/>
            <person name="Okitani R."/>
            <person name="Kawakami T."/>
            <person name="Noguchi S."/>
            <person name="Itoh T."/>
            <person name="Shigeta K."/>
            <person name="Senba T."/>
            <person name="Matsumura K."/>
            <person name="Nakajima Y."/>
            <person name="Mizuno T."/>
            <person name="Morinaga M."/>
            <person name="Sasaki M."/>
            <person name="Togashi T."/>
            <person name="Oyama M."/>
            <person name="Hata H."/>
            <person name="Watanabe M."/>
            <person name="Komatsu T."/>
            <person name="Mizushima-Sugano J."/>
            <person name="Satoh T."/>
            <person name="Shirai Y."/>
            <person name="Takahashi Y."/>
            <person name="Nakagawa K."/>
            <person name="Okumura K."/>
            <person name="Nagase T."/>
            <person name="Nomura N."/>
            <person name="Kikuchi H."/>
            <person name="Masuho Y."/>
            <person name="Yamashita R."/>
            <person name="Nakai K."/>
            <person name="Yada T."/>
            <person name="Nakamura Y."/>
            <person name="Ohara O."/>
            <person name="Isogai T."/>
            <person name="Sugano S."/>
        </authorList>
    </citation>
    <scope>NUCLEOTIDE SEQUENCE [LARGE SCALE MRNA] (ISOFORM 1)</scope>
    <source>
        <tissue>Testis</tissue>
    </source>
</reference>
<reference key="4">
    <citation type="journal article" date="2005" name="Nature">
        <title>Generation and annotation of the DNA sequences of human chromosomes 2 and 4.</title>
        <authorList>
            <person name="Hillier L.W."/>
            <person name="Graves T.A."/>
            <person name="Fulton R.S."/>
            <person name="Fulton L.A."/>
            <person name="Pepin K.H."/>
            <person name="Minx P."/>
            <person name="Wagner-McPherson C."/>
            <person name="Layman D."/>
            <person name="Wylie K."/>
            <person name="Sekhon M."/>
            <person name="Becker M.C."/>
            <person name="Fewell G.A."/>
            <person name="Delehaunty K.D."/>
            <person name="Miner T.L."/>
            <person name="Nash W.E."/>
            <person name="Kremitzki C."/>
            <person name="Oddy L."/>
            <person name="Du H."/>
            <person name="Sun H."/>
            <person name="Bradshaw-Cordum H."/>
            <person name="Ali J."/>
            <person name="Carter J."/>
            <person name="Cordes M."/>
            <person name="Harris A."/>
            <person name="Isak A."/>
            <person name="van Brunt A."/>
            <person name="Nguyen C."/>
            <person name="Du F."/>
            <person name="Courtney L."/>
            <person name="Kalicki J."/>
            <person name="Ozersky P."/>
            <person name="Abbott S."/>
            <person name="Armstrong J."/>
            <person name="Belter E.A."/>
            <person name="Caruso L."/>
            <person name="Cedroni M."/>
            <person name="Cotton M."/>
            <person name="Davidson T."/>
            <person name="Desai A."/>
            <person name="Elliott G."/>
            <person name="Erb T."/>
            <person name="Fronick C."/>
            <person name="Gaige T."/>
            <person name="Haakenson W."/>
            <person name="Haglund K."/>
            <person name="Holmes A."/>
            <person name="Harkins R."/>
            <person name="Kim K."/>
            <person name="Kruchowski S.S."/>
            <person name="Strong C.M."/>
            <person name="Grewal N."/>
            <person name="Goyea E."/>
            <person name="Hou S."/>
            <person name="Levy A."/>
            <person name="Martinka S."/>
            <person name="Mead K."/>
            <person name="McLellan M.D."/>
            <person name="Meyer R."/>
            <person name="Randall-Maher J."/>
            <person name="Tomlinson C."/>
            <person name="Dauphin-Kohlberg S."/>
            <person name="Kozlowicz-Reilly A."/>
            <person name="Shah N."/>
            <person name="Swearengen-Shahid S."/>
            <person name="Snider J."/>
            <person name="Strong J.T."/>
            <person name="Thompson J."/>
            <person name="Yoakum M."/>
            <person name="Leonard S."/>
            <person name="Pearman C."/>
            <person name="Trani L."/>
            <person name="Radionenko M."/>
            <person name="Waligorski J.E."/>
            <person name="Wang C."/>
            <person name="Rock S.M."/>
            <person name="Tin-Wollam A.-M."/>
            <person name="Maupin R."/>
            <person name="Latreille P."/>
            <person name="Wendl M.C."/>
            <person name="Yang S.-P."/>
            <person name="Pohl C."/>
            <person name="Wallis J.W."/>
            <person name="Spieth J."/>
            <person name="Bieri T.A."/>
            <person name="Berkowicz N."/>
            <person name="Nelson J.O."/>
            <person name="Osborne J."/>
            <person name="Ding L."/>
            <person name="Meyer R."/>
            <person name="Sabo A."/>
            <person name="Shotland Y."/>
            <person name="Sinha P."/>
            <person name="Wohldmann P.E."/>
            <person name="Cook L.L."/>
            <person name="Hickenbotham M.T."/>
            <person name="Eldred J."/>
            <person name="Williams D."/>
            <person name="Jones T.A."/>
            <person name="She X."/>
            <person name="Ciccarelli F.D."/>
            <person name="Izaurralde E."/>
            <person name="Taylor J."/>
            <person name="Schmutz J."/>
            <person name="Myers R.M."/>
            <person name="Cox D.R."/>
            <person name="Huang X."/>
            <person name="McPherson J.D."/>
            <person name="Mardis E.R."/>
            <person name="Clifton S.W."/>
            <person name="Warren W.C."/>
            <person name="Chinwalla A.T."/>
            <person name="Eddy S.R."/>
            <person name="Marra M.A."/>
            <person name="Ovcharenko I."/>
            <person name="Furey T.S."/>
            <person name="Miller W."/>
            <person name="Eichler E.E."/>
            <person name="Bork P."/>
            <person name="Suyama M."/>
            <person name="Torrents D."/>
            <person name="Waterston R.H."/>
            <person name="Wilson R.K."/>
        </authorList>
    </citation>
    <scope>NUCLEOTIDE SEQUENCE [LARGE SCALE GENOMIC DNA]</scope>
</reference>
<reference key="5">
    <citation type="journal article" date="2004" name="Genome Res.">
        <title>The status, quality, and expansion of the NIH full-length cDNA project: the Mammalian Gene Collection (MGC).</title>
        <authorList>
            <consortium name="The MGC Project Team"/>
        </authorList>
    </citation>
    <scope>NUCLEOTIDE SEQUENCE [LARGE SCALE MRNA] (ISOFORM 1)</scope>
    <source>
        <tissue>Testis</tissue>
    </source>
</reference>
<reference key="6">
    <citation type="journal article" date="2009" name="PLoS Genet.">
        <title>Genome-wide analysis of histidine repeats reveals their role in the localization of human proteins to the nuclear speckles compartment.</title>
        <authorList>
            <person name="Salichs E."/>
            <person name="Ledda A."/>
            <person name="Mularoni L."/>
            <person name="Alba M.M."/>
            <person name="de la Luna S."/>
        </authorList>
    </citation>
    <scope>NUCLEOTIDE SEQUENCE [MRNA] OF 7-409 (ISOFORM 1)</scope>
    <scope>FUNCTION</scope>
    <scope>SUBCELLULAR LOCATION</scope>
    <scope>MOTIF</scope>
    <scope>MUTAGENESIS OF 171-HIS--HIS-185</scope>
    <source>
        <tissue>Testis</tissue>
    </source>
</reference>
<reference key="7">
    <citation type="journal article" date="1993" name="Proc. Natl. Acad. Sci. U.S.A.">
        <title>Differential expression of four members of the POU family of proteins in activated and phorbol 12-myristate 13-acetate-treated Jurkat T cells.</title>
        <authorList>
            <person name="Bhargava A.K."/>
            <person name="Li Z."/>
            <person name="Weissman S.M."/>
        </authorList>
    </citation>
    <scope>NUCLEOTIDE SEQUENCE [MRNA] OF 274-391 (ISOFORM 1/2)</scope>
</reference>
<reference key="8">
    <citation type="journal article" date="2001" name="Oncogene">
        <title>The Brn-3b POU family transcription factor regulates the cellular growth, proliferation, and anchorage dependence of MCF7 human breast cancer cells.</title>
        <authorList>
            <person name="Dennis J.H."/>
            <person name="Budhram-Mahadeo V."/>
            <person name="Latchman D.S."/>
        </authorList>
    </citation>
    <scope>TISSUE SPECIFICITY</scope>
</reference>
<reference key="9">
    <citation type="journal article" date="2013" name="Mol. Vis.">
        <title>RIT2, a neuron-specific small guanosine triphosphatase, is expressed in retinal neuronal cells and its promoter is modulated by the POU4 transcription factors.</title>
        <authorList>
            <person name="Zhang L."/>
            <person name="Wahlin K."/>
            <person name="Li Y."/>
            <person name="Masuda T."/>
            <person name="Yang Z."/>
            <person name="Zack D.J."/>
            <person name="Esumi N."/>
        </authorList>
    </citation>
    <scope>FUNCTION</scope>
    <scope>DNA-BINDING</scope>
</reference>
<organism>
    <name type="scientific">Homo sapiens</name>
    <name type="common">Human</name>
    <dbReference type="NCBI Taxonomy" id="9606"/>
    <lineage>
        <taxon>Eukaryota</taxon>
        <taxon>Metazoa</taxon>
        <taxon>Chordata</taxon>
        <taxon>Craniata</taxon>
        <taxon>Vertebrata</taxon>
        <taxon>Euteleostomi</taxon>
        <taxon>Mammalia</taxon>
        <taxon>Eutheria</taxon>
        <taxon>Euarchontoglires</taxon>
        <taxon>Primates</taxon>
        <taxon>Haplorrhini</taxon>
        <taxon>Catarrhini</taxon>
        <taxon>Hominidae</taxon>
        <taxon>Homo</taxon>
    </lineage>
</organism>